<proteinExistence type="evidence at transcript level"/>
<feature type="signal peptide" evidence="2">
    <location>
        <begin position="1" status="less than"/>
        <end position="9"/>
    </location>
</feature>
<feature type="propeptide" id="PRO_0000293099" evidence="1">
    <location>
        <begin position="10"/>
        <end position="17"/>
    </location>
</feature>
<feature type="chain" id="PRO_0000293100" description="Acidic phospholipase A2 Bc-PL">
    <location>
        <begin position="18"/>
        <end position="142"/>
    </location>
</feature>
<feature type="active site" evidence="1">
    <location>
        <position position="65"/>
    </location>
</feature>
<feature type="active site" evidence="1">
    <location>
        <position position="116"/>
    </location>
</feature>
<feature type="binding site" evidence="1">
    <location>
        <position position="45"/>
    </location>
    <ligand>
        <name>Ca(2+)</name>
        <dbReference type="ChEBI" id="CHEBI:29108"/>
    </ligand>
</feature>
<feature type="binding site" evidence="1">
    <location>
        <position position="47"/>
    </location>
    <ligand>
        <name>Ca(2+)</name>
        <dbReference type="ChEBI" id="CHEBI:29108"/>
    </ligand>
</feature>
<feature type="binding site" evidence="1">
    <location>
        <position position="49"/>
    </location>
    <ligand>
        <name>Ca(2+)</name>
        <dbReference type="ChEBI" id="CHEBI:29108"/>
    </ligand>
</feature>
<feature type="binding site" evidence="1">
    <location>
        <position position="66"/>
    </location>
    <ligand>
        <name>Ca(2+)</name>
        <dbReference type="ChEBI" id="CHEBI:29108"/>
    </ligand>
</feature>
<feature type="disulfide bond" evidence="1">
    <location>
        <begin position="28"/>
        <end position="94"/>
    </location>
</feature>
<feature type="disulfide bond" evidence="1">
    <location>
        <begin position="44"/>
        <end position="141"/>
    </location>
</feature>
<feature type="disulfide bond" evidence="1">
    <location>
        <begin position="46"/>
        <end position="62"/>
    </location>
</feature>
<feature type="disulfide bond" evidence="1">
    <location>
        <begin position="61"/>
        <end position="122"/>
    </location>
</feature>
<feature type="disulfide bond" evidence="1">
    <location>
        <begin position="68"/>
        <end position="115"/>
    </location>
</feature>
<feature type="disulfide bond" evidence="1">
    <location>
        <begin position="78"/>
        <end position="108"/>
    </location>
</feature>
<feature type="disulfide bond" evidence="1">
    <location>
        <begin position="101"/>
        <end position="113"/>
    </location>
</feature>
<feature type="non-terminal residue">
    <location>
        <position position="1"/>
    </location>
</feature>
<sequence>AVCVSLLGAANIPPQPLTFLQFNEMIECTIPGSFPLLDNMDCGCYCGTGGRGTPVDMLDRCCKEHDDCYAQIKENLKCSSLLNVPYVKQYSFTCSEGDLTCSDAAGTCARIVCDCDRTAALCFAEAPYKRRNFKIDYKTRCQ</sequence>
<name>PA2AB_BUNCA</name>
<dbReference type="EC" id="3.1.1.4"/>
<dbReference type="EMBL" id="AF492561">
    <property type="protein sequence ID" value="AAO84769.1"/>
    <property type="molecule type" value="mRNA"/>
</dbReference>
<dbReference type="SMR" id="Q802I1"/>
<dbReference type="GO" id="GO:0005576">
    <property type="term" value="C:extracellular region"/>
    <property type="evidence" value="ECO:0007669"/>
    <property type="project" value="UniProtKB-SubCell"/>
</dbReference>
<dbReference type="GO" id="GO:0005509">
    <property type="term" value="F:calcium ion binding"/>
    <property type="evidence" value="ECO:0007669"/>
    <property type="project" value="InterPro"/>
</dbReference>
<dbReference type="GO" id="GO:0047498">
    <property type="term" value="F:calcium-dependent phospholipase A2 activity"/>
    <property type="evidence" value="ECO:0007669"/>
    <property type="project" value="TreeGrafter"/>
</dbReference>
<dbReference type="GO" id="GO:0005543">
    <property type="term" value="F:phospholipid binding"/>
    <property type="evidence" value="ECO:0007669"/>
    <property type="project" value="TreeGrafter"/>
</dbReference>
<dbReference type="GO" id="GO:0050482">
    <property type="term" value="P:arachidonate secretion"/>
    <property type="evidence" value="ECO:0007669"/>
    <property type="project" value="InterPro"/>
</dbReference>
<dbReference type="GO" id="GO:0016042">
    <property type="term" value="P:lipid catabolic process"/>
    <property type="evidence" value="ECO:0007669"/>
    <property type="project" value="UniProtKB-KW"/>
</dbReference>
<dbReference type="GO" id="GO:0006644">
    <property type="term" value="P:phospholipid metabolic process"/>
    <property type="evidence" value="ECO:0007669"/>
    <property type="project" value="InterPro"/>
</dbReference>
<dbReference type="CDD" id="cd00125">
    <property type="entry name" value="PLA2c"/>
    <property type="match status" value="1"/>
</dbReference>
<dbReference type="FunFam" id="1.20.90.10:FF:000007">
    <property type="entry name" value="Acidic phospholipase A2"/>
    <property type="match status" value="1"/>
</dbReference>
<dbReference type="Gene3D" id="1.20.90.10">
    <property type="entry name" value="Phospholipase A2 domain"/>
    <property type="match status" value="1"/>
</dbReference>
<dbReference type="InterPro" id="IPR001211">
    <property type="entry name" value="PLipase_A2"/>
</dbReference>
<dbReference type="InterPro" id="IPR033112">
    <property type="entry name" value="PLipase_A2_Asp_AS"/>
</dbReference>
<dbReference type="InterPro" id="IPR016090">
    <property type="entry name" value="PLipase_A2_dom"/>
</dbReference>
<dbReference type="InterPro" id="IPR036444">
    <property type="entry name" value="PLipase_A2_dom_sf"/>
</dbReference>
<dbReference type="InterPro" id="IPR033113">
    <property type="entry name" value="PLipase_A2_His_AS"/>
</dbReference>
<dbReference type="PANTHER" id="PTHR11716:SF94">
    <property type="entry name" value="PHOSPHOLIPASE A2"/>
    <property type="match status" value="1"/>
</dbReference>
<dbReference type="PANTHER" id="PTHR11716">
    <property type="entry name" value="PHOSPHOLIPASE A2 FAMILY MEMBER"/>
    <property type="match status" value="1"/>
</dbReference>
<dbReference type="Pfam" id="PF00068">
    <property type="entry name" value="Phospholip_A2_1"/>
    <property type="match status" value="1"/>
</dbReference>
<dbReference type="PRINTS" id="PR00389">
    <property type="entry name" value="PHPHLIPASEA2"/>
</dbReference>
<dbReference type="SMART" id="SM00085">
    <property type="entry name" value="PA2c"/>
    <property type="match status" value="1"/>
</dbReference>
<dbReference type="SUPFAM" id="SSF48619">
    <property type="entry name" value="Phospholipase A2, PLA2"/>
    <property type="match status" value="1"/>
</dbReference>
<dbReference type="PROSITE" id="PS00119">
    <property type="entry name" value="PA2_ASP"/>
    <property type="match status" value="1"/>
</dbReference>
<dbReference type="PROSITE" id="PS00118">
    <property type="entry name" value="PA2_HIS"/>
    <property type="match status" value="1"/>
</dbReference>
<comment type="function">
    <text>PLA2 catalyzes the calcium-dependent hydrolysis of the 2-acyl groups in 3-sn-phosphoglycerides.</text>
</comment>
<comment type="catalytic activity">
    <reaction evidence="3 4">
        <text>a 1,2-diacyl-sn-glycero-3-phosphocholine + H2O = a 1-acyl-sn-glycero-3-phosphocholine + a fatty acid + H(+)</text>
        <dbReference type="Rhea" id="RHEA:15801"/>
        <dbReference type="ChEBI" id="CHEBI:15377"/>
        <dbReference type="ChEBI" id="CHEBI:15378"/>
        <dbReference type="ChEBI" id="CHEBI:28868"/>
        <dbReference type="ChEBI" id="CHEBI:57643"/>
        <dbReference type="ChEBI" id="CHEBI:58168"/>
        <dbReference type="EC" id="3.1.1.4"/>
    </reaction>
</comment>
<comment type="cofactor">
    <cofactor evidence="1">
        <name>Ca(2+)</name>
        <dbReference type="ChEBI" id="CHEBI:29108"/>
    </cofactor>
    <text evidence="1">Binds 1 Ca(2+) ion.</text>
</comment>
<comment type="subcellular location">
    <subcellularLocation>
        <location evidence="1">Secreted</location>
    </subcellularLocation>
</comment>
<comment type="tissue specificity">
    <text evidence="5">Expressed by the venom gland.</text>
</comment>
<comment type="similarity">
    <text evidence="6">Belongs to the phospholipase A2 family. Group I subfamily. D49 sub-subfamily.</text>
</comment>
<comment type="caution">
    <text evidence="7">This protein is not found in the crude venom.</text>
</comment>
<accession>Q802I1</accession>
<organism>
    <name type="scientific">Bungarus candidus</name>
    <name type="common">Malayan krait</name>
    <dbReference type="NCBI Taxonomy" id="92438"/>
    <lineage>
        <taxon>Eukaryota</taxon>
        <taxon>Metazoa</taxon>
        <taxon>Chordata</taxon>
        <taxon>Craniata</taxon>
        <taxon>Vertebrata</taxon>
        <taxon>Euteleostomi</taxon>
        <taxon>Lepidosauria</taxon>
        <taxon>Squamata</taxon>
        <taxon>Bifurcata</taxon>
        <taxon>Unidentata</taxon>
        <taxon>Episquamata</taxon>
        <taxon>Toxicofera</taxon>
        <taxon>Serpentes</taxon>
        <taxon>Colubroidea</taxon>
        <taxon>Elapidae</taxon>
        <taxon>Bungarinae</taxon>
        <taxon>Bungarus</taxon>
    </lineage>
</organism>
<protein>
    <recommendedName>
        <fullName>Acidic phospholipase A2 Bc-PL</fullName>
        <shortName>svPLA2</shortName>
        <ecNumber>3.1.1.4</ecNumber>
    </recommendedName>
    <alternativeName>
        <fullName>Phosphatidylcholine 2-acylhydrolase</fullName>
    </alternativeName>
</protein>
<evidence type="ECO:0000250" key="1"/>
<evidence type="ECO:0000255" key="2"/>
<evidence type="ECO:0000255" key="3">
    <source>
        <dbReference type="PROSITE-ProRule" id="PRU10035"/>
    </source>
</evidence>
<evidence type="ECO:0000255" key="4">
    <source>
        <dbReference type="PROSITE-ProRule" id="PRU10036"/>
    </source>
</evidence>
<evidence type="ECO:0000269" key="5">
    <source>
    </source>
</evidence>
<evidence type="ECO:0000305" key="6"/>
<evidence type="ECO:0000305" key="7">
    <source>
    </source>
</evidence>
<reference key="1">
    <citation type="journal article" date="2002" name="Toxicon">
        <title>A novel phospholipase A(2) from the venom glands of Bungarus candidus: cloning and sequence-comparison.</title>
        <authorList>
            <person name="Tsai I.-H."/>
            <person name="Hsu H.Y."/>
            <person name="Wang Y.M."/>
        </authorList>
    </citation>
    <scope>NUCLEOTIDE SEQUENCE [MRNA]</scope>
    <scope>TISSUE SPECIFICITY</scope>
    <source>
        <tissue>Venom gland</tissue>
    </source>
</reference>
<keyword id="KW-0106">Calcium</keyword>
<keyword id="KW-1015">Disulfide bond</keyword>
<keyword id="KW-0378">Hydrolase</keyword>
<keyword id="KW-0442">Lipid degradation</keyword>
<keyword id="KW-0443">Lipid metabolism</keyword>
<keyword id="KW-0479">Metal-binding</keyword>
<keyword id="KW-0964">Secreted</keyword>
<keyword id="KW-0732">Signal</keyword>